<organism>
    <name type="scientific">Vibrio phage phiVC8</name>
    <dbReference type="NCBI Taxonomy" id="1076759"/>
    <lineage>
        <taxon>Viruses</taxon>
        <taxon>Duplodnaviria</taxon>
        <taxon>Heunggongvirae</taxon>
        <taxon>Uroviricota</taxon>
        <taxon>Caudoviricetes</taxon>
        <taxon>Enhodamvirus</taxon>
        <taxon>Enhodamvirus VC8</taxon>
    </lineage>
</organism>
<organismHost>
    <name type="scientific">Vibrio cholerae</name>
    <dbReference type="NCBI Taxonomy" id="666"/>
</organismHost>
<gene>
    <name evidence="1" type="primary">purZ</name>
    <name evidence="7" type="ORF">phiVC8_p27</name>
</gene>
<reference key="1">
    <citation type="journal article" date="2016" name="Virol. J.">
        <title>Genetic characterization of OVC8 lytic phage for Vibrio cholerae O1.</title>
        <authorList>
            <person name="Solis-Sanchez A."/>
            <person name="Hernandez-Chinas U."/>
            <person name="Navarro-Ocana A."/>
            <person name="De la Mora J."/>
            <person name="Xicohtencatl-Cortes J."/>
            <person name="Eslava-Campos C."/>
        </authorList>
    </citation>
    <scope>NUCLEOTIDE SEQUENCE [LARGE SCALE GENOMIC DNA]</scope>
</reference>
<reference key="2">
    <citation type="journal article" date="2021" name="Science">
        <title>A widespread pathway for substitution of adenine by diaminopurine in phage genomes.</title>
        <authorList>
            <person name="Zhou Y."/>
            <person name="Xu X."/>
            <person name="Wei Y."/>
            <person name="Cheng Y."/>
            <person name="Guo Y."/>
            <person name="Khudyakov I."/>
            <person name="Liu F."/>
            <person name="He P."/>
            <person name="Song Z."/>
            <person name="Li Z."/>
            <person name="Gao Y."/>
            <person name="Ang E.L."/>
            <person name="Zhao H."/>
            <person name="Zhang Y."/>
            <person name="Zhao S."/>
        </authorList>
    </citation>
    <scope>BIOPHYSICOCHEMICAL PROPERTIES</scope>
    <scope>CATALYTIC ACTIVITY</scope>
    <scope>ACTIVE SITE</scope>
    <scope>FUNCTION</scope>
    <scope>PATHWAY</scope>
</reference>
<reference evidence="8 9 10 11" key="3">
    <citation type="journal article" date="2021" name="Science">
        <title>A third purine biosynthetic pathway encoded by aminoadenine-based viral DNA genomes.</title>
        <authorList>
            <person name="Sleiman D."/>
            <person name="Garcia P.S."/>
            <person name="Lagune M."/>
            <person name="Loc'h J."/>
            <person name="Haouz A."/>
            <person name="Taib N."/>
            <person name="Roethlisberger P."/>
            <person name="Gribaldo S."/>
            <person name="Marliere P."/>
            <person name="Kaminski P.A."/>
        </authorList>
    </citation>
    <scope>X-RAY CRYSTALLOGRAPHY (1.33 ANGSTROMS) OF APOENZYME AND COMPLEXES WITH ATP; DGMP; MAGNESIUM; ATP ANALOG AND L-ASPARTATE</scope>
    <scope>FUNCTION</scope>
    <scope>CATALYTIC ACTIVITY</scope>
    <scope>COFACTOR</scope>
    <scope>BIOPHYSICOCHEMICAL PROPERTIES</scope>
</reference>
<dbReference type="EC" id="6.3.4.25" evidence="1 2 3"/>
<dbReference type="EMBL" id="JF712866">
    <property type="protein sequence ID" value="AEM62924.1"/>
    <property type="molecule type" value="Genomic_DNA"/>
</dbReference>
<dbReference type="RefSeq" id="YP_009140156.1">
    <property type="nucleotide sequence ID" value="NC_027118.1"/>
</dbReference>
<dbReference type="PDB" id="6FKO">
    <property type="method" value="X-ray"/>
    <property type="resolution" value="2.10 A"/>
    <property type="chains" value="A/B=3-343"/>
</dbReference>
<dbReference type="PDB" id="6FLF">
    <property type="method" value="X-ray"/>
    <property type="resolution" value="1.33 A"/>
    <property type="chains" value="A=3-343"/>
</dbReference>
<dbReference type="PDB" id="6FM0">
    <property type="method" value="X-ray"/>
    <property type="resolution" value="1.70 A"/>
    <property type="chains" value="A/B=3-343"/>
</dbReference>
<dbReference type="PDB" id="6FM1">
    <property type="method" value="X-ray"/>
    <property type="resolution" value="2.35 A"/>
    <property type="chains" value="A/B=1-343"/>
</dbReference>
<dbReference type="PDB" id="6FM3">
    <property type="method" value="X-ray"/>
    <property type="resolution" value="1.95 A"/>
    <property type="chains" value="A=3-343"/>
</dbReference>
<dbReference type="PDB" id="6RM2">
    <property type="method" value="X-ray"/>
    <property type="resolution" value="2.50 A"/>
    <property type="chains" value="A/B=1-343"/>
</dbReference>
<dbReference type="PDB" id="6TNH">
    <property type="method" value="X-ray"/>
    <property type="resolution" value="2.21 A"/>
    <property type="chains" value="A/B=3-343"/>
</dbReference>
<dbReference type="PDBsum" id="6FKO"/>
<dbReference type="PDBsum" id="6FLF"/>
<dbReference type="PDBsum" id="6FM0"/>
<dbReference type="PDBsum" id="6FM1"/>
<dbReference type="PDBsum" id="6FM3"/>
<dbReference type="PDBsum" id="6RM2"/>
<dbReference type="PDBsum" id="6TNH"/>
<dbReference type="SMR" id="G3FFN6"/>
<dbReference type="GeneID" id="24366411"/>
<dbReference type="KEGG" id="vg:24366411"/>
<dbReference type="OrthoDB" id="3395at10239"/>
<dbReference type="BRENDA" id="6.3.4.25">
    <property type="organism ID" value="17967"/>
</dbReference>
<dbReference type="Proteomes" id="UP000008906">
    <property type="component" value="Genome"/>
</dbReference>
<dbReference type="GO" id="GO:0004019">
    <property type="term" value="F:adenylosuccinate synthase activity"/>
    <property type="evidence" value="ECO:0007669"/>
    <property type="project" value="InterPro"/>
</dbReference>
<dbReference type="GO" id="GO:0005524">
    <property type="term" value="F:ATP binding"/>
    <property type="evidence" value="ECO:0007669"/>
    <property type="project" value="UniProtKB-UniRule"/>
</dbReference>
<dbReference type="GO" id="GO:0000287">
    <property type="term" value="F:magnesium ion binding"/>
    <property type="evidence" value="ECO:0007669"/>
    <property type="project" value="UniProtKB-UniRule"/>
</dbReference>
<dbReference type="GO" id="GO:0044208">
    <property type="term" value="P:'de novo' AMP biosynthetic process"/>
    <property type="evidence" value="ECO:0007669"/>
    <property type="project" value="TreeGrafter"/>
</dbReference>
<dbReference type="GO" id="GO:0046040">
    <property type="term" value="P:IMP metabolic process"/>
    <property type="evidence" value="ECO:0007669"/>
    <property type="project" value="TreeGrafter"/>
</dbReference>
<dbReference type="GO" id="GO:0006164">
    <property type="term" value="P:purine nucleotide biosynthetic process"/>
    <property type="evidence" value="ECO:0000314"/>
    <property type="project" value="UniProtKB"/>
</dbReference>
<dbReference type="Gene3D" id="3.40.440.10">
    <property type="entry name" value="Adenylosuccinate Synthetase, subunit A, domain 1"/>
    <property type="match status" value="2"/>
</dbReference>
<dbReference type="HAMAP" id="MF_00011">
    <property type="entry name" value="Adenylosucc_synth"/>
    <property type="match status" value="1"/>
</dbReference>
<dbReference type="HAMAP" id="MF_04166">
    <property type="entry name" value="Phage_PURZ"/>
    <property type="match status" value="1"/>
</dbReference>
<dbReference type="InterPro" id="IPR042109">
    <property type="entry name" value="Adenylosuccinate_synth_dom1"/>
</dbReference>
<dbReference type="InterPro" id="IPR001114">
    <property type="entry name" value="Adenylosuccinate_synthetase"/>
</dbReference>
<dbReference type="InterPro" id="IPR027417">
    <property type="entry name" value="P-loop_NTPase"/>
</dbReference>
<dbReference type="InterPro" id="IPR046383">
    <property type="entry name" value="Phage_PurZ"/>
</dbReference>
<dbReference type="NCBIfam" id="NF038379">
    <property type="entry name" value="amino_Aden_PurZ"/>
    <property type="match status" value="1"/>
</dbReference>
<dbReference type="PANTHER" id="PTHR11846">
    <property type="entry name" value="ADENYLOSUCCINATE SYNTHETASE"/>
    <property type="match status" value="1"/>
</dbReference>
<dbReference type="PANTHER" id="PTHR11846:SF0">
    <property type="entry name" value="ADENYLOSUCCINATE SYNTHETASE"/>
    <property type="match status" value="1"/>
</dbReference>
<dbReference type="Pfam" id="PF00709">
    <property type="entry name" value="Adenylsucc_synt"/>
    <property type="match status" value="1"/>
</dbReference>
<dbReference type="SMART" id="SM00788">
    <property type="entry name" value="Adenylsucc_synt"/>
    <property type="match status" value="1"/>
</dbReference>
<dbReference type="SUPFAM" id="SSF52540">
    <property type="entry name" value="P-loop containing nucleoside triphosphate hydrolases"/>
    <property type="match status" value="1"/>
</dbReference>
<name>PURZ_BPVC8</name>
<accession>G3FFN6</accession>
<sequence>MKNVDLVIDLQFGSTGKGLIAGYLAEKNGYDTVINANMPNAGHTYINAEGRKWMHKVLPNGIVSPNLKRVMLGAGSVFSINRLMEEIEMSKDLLHDKVAILIHPMATVLDEEAHKKAEVGIATSIGSTGQGSMAAMVEKLQRDPTNNTIVARDVAQYDGRIAQYVCTVEEWDMALMASERILAEGAQGFSLSLNQEFYPYCTSRDCTPARFLADMGIPLPMLNKVIGTARCHPIRVGGTSGGHYPDQEELTWEQLGQVPELTTVTKKVRRVFSFSFIQMQKAMWTCQPDEVFLNFCNYLSPMGWQDIVHQIEVAAQSRYCDAEVKYLGFGPTFNDVELREDVM</sequence>
<comment type="function">
    <text evidence="1 2 3">Involved in the synthesis of the atypical nucleotide dZTP (2-amino-2'-deoxyadenosine-5'-triphosphate) (PubMed:33926954). Catalyzes the condensation of aspartate with deoxyguanylate into dSMP (N6-succino-2-amino-2'-deoxyadenylate), which undergoes defumarylation and phosphorylation respectively by host PurB and guanylate/nucleoside diphosphate kinases to give dZTP (PubMed:33926955). dZTP is integrated into the viral genome instead of adenine by the viral DNA polymerase. This Z-base probably completely replaces adenosine and forms a triple bond to the opposite T-base (PubMed:33926955). The resulting non-standard viral DNA is called Z-genome (PubMed:33926955). The chemically modified DNA is probably harder for the host bacteria to digest with nucleases or restriction enzymes (Probable).</text>
</comment>
<comment type="catalytic activity">
    <reaction evidence="1 2 3">
        <text>dGMP + L-aspartate + ATP = (2S)-2-amino-2'-deoxyadenylo-succinate + ADP + phosphate + 2 H(+)</text>
        <dbReference type="Rhea" id="RHEA:67628"/>
        <dbReference type="ChEBI" id="CHEBI:15378"/>
        <dbReference type="ChEBI" id="CHEBI:29991"/>
        <dbReference type="ChEBI" id="CHEBI:30616"/>
        <dbReference type="ChEBI" id="CHEBI:43474"/>
        <dbReference type="ChEBI" id="CHEBI:57673"/>
        <dbReference type="ChEBI" id="CHEBI:172924"/>
        <dbReference type="ChEBI" id="CHEBI:456216"/>
        <dbReference type="EC" id="6.3.4.25"/>
    </reaction>
    <physiologicalReaction direction="left-to-right" evidence="6">
        <dbReference type="Rhea" id="RHEA:67629"/>
    </physiologicalReaction>
</comment>
<comment type="cofactor">
    <cofactor evidence="1 3">
        <name>Mg(2+)</name>
        <dbReference type="ChEBI" id="CHEBI:18420"/>
    </cofactor>
</comment>
<comment type="biophysicochemical properties">
    <kinetics>
        <KM evidence="2">3.8 uM for dGMP</KM>
        <KM evidence="3">13 uM for dGMP</KM>
        <KM evidence="2">4.1 uM for ATP</KM>
        <KM evidence="3">90 uM for ATP</KM>
        <KM evidence="2">80.5 uM for Asp</KM>
        <KM evidence="3">2900 uM for Asp</KM>
    </kinetics>
</comment>
<comment type="pathway">
    <text evidence="1 2">Purine metabolism.</text>
</comment>
<comment type="similarity">
    <text evidence="1">Belongs to the Caudovirales PurZ family.</text>
</comment>
<keyword id="KW-0002">3D-structure</keyword>
<keyword id="KW-0067">ATP-binding</keyword>
<keyword id="KW-0436">Ligase</keyword>
<keyword id="KW-0460">Magnesium</keyword>
<keyword id="KW-0479">Metal-binding</keyword>
<keyword id="KW-0547">Nucleotide-binding</keyword>
<keyword id="KW-0658">Purine biosynthesis</keyword>
<keyword id="KW-1185">Reference proteome</keyword>
<feature type="chain" id="PRO_0000453680" description="N6-succino-2-amino-2'-deoxyadenylate synthase">
    <location>
        <begin position="1"/>
        <end position="343"/>
    </location>
</feature>
<feature type="active site" description="Proton acceptor" evidence="1 6">
    <location>
        <position position="14"/>
    </location>
</feature>
<feature type="binding site" evidence="3 10">
    <location>
        <position position="14"/>
    </location>
    <ligand>
        <name>ATP</name>
        <dbReference type="ChEBI" id="CHEBI:30616"/>
    </ligand>
</feature>
<feature type="binding site" evidence="3 10">
    <location>
        <position position="14"/>
    </location>
    <ligand>
        <name>dGMP</name>
        <dbReference type="ChEBI" id="CHEBI:57673"/>
    </ligand>
</feature>
<feature type="binding site" evidence="3 10">
    <location>
        <position position="14"/>
    </location>
    <ligand>
        <name>Mg(2+)</name>
        <dbReference type="ChEBI" id="CHEBI:18420"/>
    </ligand>
</feature>
<feature type="binding site" evidence="3 10">
    <location>
        <position position="15"/>
    </location>
    <ligand>
        <name>ATP</name>
        <dbReference type="ChEBI" id="CHEBI:30616"/>
    </ligand>
</feature>
<feature type="binding site" evidence="3 10">
    <location>
        <position position="16"/>
    </location>
    <ligand>
        <name>ATP</name>
        <dbReference type="ChEBI" id="CHEBI:30616"/>
    </ligand>
</feature>
<feature type="binding site" evidence="3 10">
    <location>
        <position position="17"/>
    </location>
    <ligand>
        <name>ATP</name>
        <dbReference type="ChEBI" id="CHEBI:30616"/>
    </ligand>
</feature>
<feature type="binding site" evidence="3 10">
    <location>
        <position position="18"/>
    </location>
    <ligand>
        <name>ATP</name>
        <dbReference type="ChEBI" id="CHEBI:30616"/>
    </ligand>
</feature>
<feature type="binding site" evidence="3 10">
    <location>
        <position position="40"/>
    </location>
    <ligand>
        <name>dGMP</name>
        <dbReference type="ChEBI" id="CHEBI:57673"/>
    </ligand>
</feature>
<feature type="binding site" evidence="3 10">
    <location>
        <position position="42"/>
    </location>
    <ligand>
        <name>ATP</name>
        <dbReference type="ChEBI" id="CHEBI:30616"/>
    </ligand>
</feature>
<feature type="binding site" evidence="3 10">
    <location>
        <position position="42"/>
    </location>
    <ligand>
        <name>Mg(2+)</name>
        <dbReference type="ChEBI" id="CHEBI:18420"/>
    </ligand>
</feature>
<feature type="binding site" evidence="3 10">
    <location>
        <position position="43"/>
    </location>
    <ligand>
        <name>ATP</name>
        <dbReference type="ChEBI" id="CHEBI:30616"/>
    </ligand>
</feature>
<feature type="binding site" evidence="3 10">
    <location>
        <position position="44"/>
    </location>
    <ligand>
        <name>ATP</name>
        <dbReference type="ChEBI" id="CHEBI:30616"/>
    </ligand>
</feature>
<feature type="binding site" evidence="3 10">
    <location>
        <position position="127"/>
    </location>
    <ligand>
        <name>dGMP</name>
        <dbReference type="ChEBI" id="CHEBI:57673"/>
    </ligand>
</feature>
<feature type="binding site" evidence="3 10">
    <location>
        <position position="128"/>
    </location>
    <ligand>
        <name>dGMP</name>
        <dbReference type="ChEBI" id="CHEBI:57673"/>
    </ligand>
</feature>
<feature type="binding site" evidence="3 10">
    <location>
        <position position="142"/>
    </location>
    <ligand>
        <name>dGMP</name>
        <dbReference type="ChEBI" id="CHEBI:57673"/>
    </ligand>
</feature>
<feature type="binding site" evidence="3 10">
    <location>
        <position position="187"/>
    </location>
    <ligand>
        <name>ATP</name>
        <dbReference type="ChEBI" id="CHEBI:30616"/>
    </ligand>
</feature>
<feature type="binding site" evidence="3 10">
    <location>
        <position position="202"/>
    </location>
    <ligand>
        <name>dGMP</name>
        <dbReference type="ChEBI" id="CHEBI:57673"/>
    </ligand>
</feature>
<feature type="binding site" evidence="3 11">
    <location>
        <position position="263"/>
    </location>
    <ligand>
        <name>L-aspartate</name>
        <dbReference type="ChEBI" id="CHEBI:29991"/>
    </ligand>
</feature>
<feature type="binding site" evidence="3 10">
    <location>
        <position position="263"/>
    </location>
    <ligand>
        <name>Mg(2+)</name>
        <dbReference type="ChEBI" id="CHEBI:18420"/>
    </ligand>
</feature>
<feature type="binding site" evidence="3 11">
    <location>
        <position position="264"/>
    </location>
    <ligand>
        <name>L-aspartate</name>
        <dbReference type="ChEBI" id="CHEBI:29991"/>
    </ligand>
</feature>
<feature type="binding site" evidence="3 11">
    <location>
        <position position="269"/>
    </location>
    <ligand>
        <name>L-aspartate</name>
        <dbReference type="ChEBI" id="CHEBI:29991"/>
    </ligand>
</feature>
<feature type="binding site" evidence="3 10">
    <location>
        <position position="294"/>
    </location>
    <ligand>
        <name>ATP</name>
        <dbReference type="ChEBI" id="CHEBI:30616"/>
    </ligand>
</feature>
<feature type="binding site" evidence="3 10">
    <location>
        <position position="297"/>
    </location>
    <ligand>
        <name>ATP</name>
        <dbReference type="ChEBI" id="CHEBI:30616"/>
    </ligand>
</feature>
<feature type="binding site" evidence="3 10">
    <location>
        <position position="330"/>
    </location>
    <ligand>
        <name>ATP</name>
        <dbReference type="ChEBI" id="CHEBI:30616"/>
    </ligand>
</feature>
<feature type="strand" evidence="13">
    <location>
        <begin position="4"/>
        <end position="13"/>
    </location>
</feature>
<feature type="helix" evidence="13">
    <location>
        <begin position="17"/>
        <end position="28"/>
    </location>
</feature>
<feature type="strand" evidence="13">
    <location>
        <begin position="31"/>
        <end position="35"/>
    </location>
</feature>
<feature type="strand" evidence="13">
    <location>
        <begin position="43"/>
        <end position="46"/>
    </location>
</feature>
<feature type="strand" evidence="13">
    <location>
        <begin position="52"/>
        <end position="58"/>
    </location>
</feature>
<feature type="helix" evidence="13">
    <location>
        <begin position="60"/>
        <end position="63"/>
    </location>
</feature>
<feature type="strand" evidence="13">
    <location>
        <begin position="69"/>
        <end position="72"/>
    </location>
</feature>
<feature type="helix" evidence="13">
    <location>
        <begin position="80"/>
        <end position="89"/>
    </location>
</feature>
<feature type="helix" evidence="13">
    <location>
        <begin position="91"/>
        <end position="94"/>
    </location>
</feature>
<feature type="strand" evidence="13">
    <location>
        <begin position="95"/>
        <end position="97"/>
    </location>
</feature>
<feature type="strand" evidence="13">
    <location>
        <begin position="99"/>
        <end position="102"/>
    </location>
</feature>
<feature type="helix" evidence="12">
    <location>
        <begin position="111"/>
        <end position="117"/>
    </location>
</feature>
<feature type="helix" evidence="12">
    <location>
        <begin position="119"/>
        <end position="124"/>
    </location>
</feature>
<feature type="helix" evidence="13">
    <location>
        <begin position="132"/>
        <end position="141"/>
    </location>
</feature>
<feature type="strand" evidence="13">
    <location>
        <begin position="148"/>
        <end position="150"/>
    </location>
</feature>
<feature type="helix" evidence="13">
    <location>
        <begin position="151"/>
        <end position="154"/>
    </location>
</feature>
<feature type="turn" evidence="13">
    <location>
        <begin position="155"/>
        <end position="157"/>
    </location>
</feature>
<feature type="helix" evidence="13">
    <location>
        <begin position="159"/>
        <end position="162"/>
    </location>
</feature>
<feature type="helix" evidence="13">
    <location>
        <begin position="168"/>
        <end position="177"/>
    </location>
</feature>
<feature type="strand" evidence="13">
    <location>
        <begin position="179"/>
        <end position="184"/>
    </location>
</feature>
<feature type="helix" evidence="13">
    <location>
        <begin position="189"/>
        <end position="191"/>
    </location>
</feature>
<feature type="turn" evidence="13">
    <location>
        <begin position="196"/>
        <end position="199"/>
    </location>
</feature>
<feature type="helix" evidence="13">
    <location>
        <begin position="208"/>
        <end position="215"/>
    </location>
</feature>
<feature type="helix" evidence="13">
    <location>
        <begin position="219"/>
        <end position="221"/>
    </location>
</feature>
<feature type="strand" evidence="13">
    <location>
        <begin position="222"/>
        <end position="232"/>
    </location>
</feature>
<feature type="strand" evidence="12">
    <location>
        <begin position="237"/>
        <end position="239"/>
    </location>
</feature>
<feature type="helix" evidence="12">
    <location>
        <begin position="252"/>
        <end position="255"/>
    </location>
</feature>
<feature type="turn" evidence="12">
    <location>
        <begin position="263"/>
        <end position="265"/>
    </location>
</feature>
<feature type="strand" evidence="13">
    <location>
        <begin position="270"/>
        <end position="272"/>
    </location>
</feature>
<feature type="helix" evidence="13">
    <location>
        <begin position="276"/>
        <end position="286"/>
    </location>
</feature>
<feature type="strand" evidence="13">
    <location>
        <begin position="289"/>
        <end position="294"/>
    </location>
</feature>
<feature type="helix" evidence="13">
    <location>
        <begin position="296"/>
        <end position="298"/>
    </location>
</feature>
<feature type="helix" evidence="13">
    <location>
        <begin position="301"/>
        <end position="317"/>
    </location>
</feature>
<feature type="strand" evidence="13">
    <location>
        <begin position="323"/>
        <end position="328"/>
    </location>
</feature>
<feature type="strand" evidence="13">
    <location>
        <begin position="330"/>
        <end position="332"/>
    </location>
</feature>
<feature type="helix" evidence="13">
    <location>
        <begin position="333"/>
        <end position="335"/>
    </location>
</feature>
<feature type="strand" evidence="13">
    <location>
        <begin position="336"/>
        <end position="338"/>
    </location>
</feature>
<feature type="helix" evidence="13">
    <location>
        <begin position="339"/>
        <end position="342"/>
    </location>
</feature>
<evidence type="ECO:0000255" key="1">
    <source>
        <dbReference type="HAMAP-Rule" id="MF_04166"/>
    </source>
</evidence>
<evidence type="ECO:0000269" key="2">
    <source>
    </source>
</evidence>
<evidence type="ECO:0000269" key="3">
    <source>
    </source>
</evidence>
<evidence type="ECO:0000303" key="4">
    <source>
    </source>
</evidence>
<evidence type="ECO:0000305" key="5"/>
<evidence type="ECO:0000305" key="6">
    <source>
    </source>
</evidence>
<evidence type="ECO:0000312" key="7">
    <source>
        <dbReference type="EMBL" id="AEM62924.1"/>
    </source>
</evidence>
<evidence type="ECO:0007744" key="8">
    <source>
        <dbReference type="PDB" id="6FLF"/>
    </source>
</evidence>
<evidence type="ECO:0007744" key="9">
    <source>
        <dbReference type="PDB" id="6FM0"/>
    </source>
</evidence>
<evidence type="ECO:0007744" key="10">
    <source>
        <dbReference type="PDB" id="6FM1"/>
    </source>
</evidence>
<evidence type="ECO:0007744" key="11">
    <source>
        <dbReference type="PDB" id="6TNH"/>
    </source>
</evidence>
<evidence type="ECO:0007829" key="12">
    <source>
        <dbReference type="PDB" id="6FKO"/>
    </source>
</evidence>
<evidence type="ECO:0007829" key="13">
    <source>
        <dbReference type="PDB" id="6FLF"/>
    </source>
</evidence>
<proteinExistence type="evidence at protein level"/>
<protein>
    <recommendedName>
        <fullName evidence="1 4">N6-succino-2-amino-2'-deoxyadenylate synthase</fullName>
        <ecNumber evidence="1 2 3">6.3.4.25</ecNumber>
    </recommendedName>
    <alternativeName>
        <fullName evidence="5">2-amino-2'-deoxyadenylo-succinate synthase</fullName>
    </alternativeName>
    <alternativeName>
        <fullName evidence="1">PurZ</fullName>
    </alternativeName>
</protein>